<accession>P03961</accession>
<sequence>MSGLRPALSTFIFLLLITGGVYPLLTTVLGQWWFPWQANGSLIREGDTVRGSALIGQNFTGNGYFHGRPSATAEMPYNPQASGGSNLAVSNPELDKLIAARVAALRAANPDASASVPVELVTASASGLDNNITPQAAAWQIPRVAKARNLSVEQLTQLIAKYSQQPLVKYIGQPVVNIVELNLALDKLDE</sequence>
<gene>
    <name evidence="1" type="primary">kdpC</name>
    <name type="ordered locus">b0696</name>
    <name type="ordered locus">JW0684</name>
</gene>
<evidence type="ECO:0000255" key="1">
    <source>
        <dbReference type="HAMAP-Rule" id="MF_00276"/>
    </source>
</evidence>
<evidence type="ECO:0000269" key="2">
    <source>
    </source>
</evidence>
<evidence type="ECO:0000269" key="3">
    <source>
    </source>
</evidence>
<evidence type="ECO:0000269" key="4">
    <source>
    </source>
</evidence>
<evidence type="ECO:0000269" key="5">
    <source>
    </source>
</evidence>
<evidence type="ECO:0000269" key="6">
    <source>
    </source>
</evidence>
<evidence type="ECO:0000269" key="7">
    <source>
    </source>
</evidence>
<evidence type="ECO:0000269" key="8">
    <source>
    </source>
</evidence>
<evidence type="ECO:0000269" key="9">
    <source>
    </source>
</evidence>
<evidence type="ECO:0000269" key="10">
    <source>
    </source>
</evidence>
<evidence type="ECO:0000269" key="11">
    <source>
    </source>
</evidence>
<evidence type="ECO:0007744" key="12">
    <source>
        <dbReference type="PDB" id="5MRW"/>
    </source>
</evidence>
<evidence type="ECO:0007744" key="13">
    <source>
        <dbReference type="PDB" id="6HRA"/>
    </source>
</evidence>
<evidence type="ECO:0007744" key="14">
    <source>
        <dbReference type="PDB" id="6HRB"/>
    </source>
</evidence>
<evidence type="ECO:0007744" key="15">
    <source>
        <dbReference type="PDB" id="7BGY"/>
    </source>
</evidence>
<evidence type="ECO:0007744" key="16">
    <source>
        <dbReference type="PDB" id="7BH1"/>
    </source>
</evidence>
<evidence type="ECO:0007744" key="17">
    <source>
        <dbReference type="PDB" id="7BH2"/>
    </source>
</evidence>
<evidence type="ECO:0007744" key="18">
    <source>
        <dbReference type="PDB" id="7LC3"/>
    </source>
</evidence>
<evidence type="ECO:0007744" key="19">
    <source>
        <dbReference type="PDB" id="7LC6"/>
    </source>
</evidence>
<evidence type="ECO:0007829" key="20">
    <source>
        <dbReference type="PDB" id="5MRW"/>
    </source>
</evidence>
<evidence type="ECO:0007829" key="21">
    <source>
        <dbReference type="PDB" id="7NNL"/>
    </source>
</evidence>
<dbReference type="EMBL" id="K02670">
    <property type="protein sequence ID" value="AAB96337.1"/>
    <property type="molecule type" value="Genomic_DNA"/>
</dbReference>
<dbReference type="EMBL" id="U00096">
    <property type="protein sequence ID" value="AAC73790.1"/>
    <property type="molecule type" value="Genomic_DNA"/>
</dbReference>
<dbReference type="EMBL" id="AP009048">
    <property type="protein sequence ID" value="BAA35353.1"/>
    <property type="molecule type" value="Genomic_DNA"/>
</dbReference>
<dbReference type="PIR" id="A01073">
    <property type="entry name" value="PWECCK"/>
</dbReference>
<dbReference type="RefSeq" id="NP_415224.1">
    <property type="nucleotide sequence ID" value="NC_000913.3"/>
</dbReference>
<dbReference type="RefSeq" id="WP_001300431.1">
    <property type="nucleotide sequence ID" value="NZ_SSZK01000045.1"/>
</dbReference>
<dbReference type="PDB" id="5MRW">
    <property type="method" value="X-ray"/>
    <property type="resolution" value="2.90 A"/>
    <property type="chains" value="C/G/K=4-190"/>
</dbReference>
<dbReference type="PDB" id="6HRA">
    <property type="method" value="EM"/>
    <property type="resolution" value="3.70 A"/>
    <property type="chains" value="C=1-190"/>
</dbReference>
<dbReference type="PDB" id="6HRB">
    <property type="method" value="EM"/>
    <property type="resolution" value="4.00 A"/>
    <property type="chains" value="C=1-190"/>
</dbReference>
<dbReference type="PDB" id="7BGY">
    <property type="method" value="EM"/>
    <property type="resolution" value="2.90 A"/>
    <property type="chains" value="C=1-190"/>
</dbReference>
<dbReference type="PDB" id="7BH1">
    <property type="method" value="EM"/>
    <property type="resolution" value="3.38 A"/>
    <property type="chains" value="C=1-190"/>
</dbReference>
<dbReference type="PDB" id="7BH2">
    <property type="method" value="EM"/>
    <property type="resolution" value="3.00 A"/>
    <property type="chains" value="C=1-190"/>
</dbReference>
<dbReference type="PDB" id="7LC3">
    <property type="method" value="EM"/>
    <property type="resolution" value="3.23 A"/>
    <property type="chains" value="C=1-190"/>
</dbReference>
<dbReference type="PDB" id="7LC6">
    <property type="method" value="EM"/>
    <property type="resolution" value="3.70 A"/>
    <property type="chains" value="C=1-190"/>
</dbReference>
<dbReference type="PDB" id="7NNL">
    <property type="method" value="EM"/>
    <property type="resolution" value="3.10 A"/>
    <property type="chains" value="C=1-190"/>
</dbReference>
<dbReference type="PDB" id="7NNP">
    <property type="method" value="EM"/>
    <property type="resolution" value="3.20 A"/>
    <property type="chains" value="C=1-190"/>
</dbReference>
<dbReference type="PDB" id="7ZRD">
    <property type="method" value="EM"/>
    <property type="resolution" value="3.30 A"/>
    <property type="chains" value="C=1-190"/>
</dbReference>
<dbReference type="PDB" id="7ZRE">
    <property type="method" value="EM"/>
    <property type="resolution" value="3.40 A"/>
    <property type="chains" value="C=1-190"/>
</dbReference>
<dbReference type="PDB" id="7ZRG">
    <property type="method" value="EM"/>
    <property type="resolution" value="3.50 A"/>
    <property type="chains" value="C=1-190"/>
</dbReference>
<dbReference type="PDB" id="7ZRH">
    <property type="method" value="EM"/>
    <property type="resolution" value="3.40 A"/>
    <property type="chains" value="C=1-190"/>
</dbReference>
<dbReference type="PDB" id="7ZRI">
    <property type="method" value="EM"/>
    <property type="resolution" value="3.50 A"/>
    <property type="chains" value="C=1-190"/>
</dbReference>
<dbReference type="PDB" id="7ZRJ">
    <property type="method" value="EM"/>
    <property type="resolution" value="3.70 A"/>
    <property type="chains" value="C=1-190"/>
</dbReference>
<dbReference type="PDB" id="7ZRK">
    <property type="method" value="EM"/>
    <property type="resolution" value="3.10 A"/>
    <property type="chains" value="C=1-190"/>
</dbReference>
<dbReference type="PDB" id="7ZRL">
    <property type="method" value="EM"/>
    <property type="resolution" value="4.00 A"/>
    <property type="chains" value="C=1-190"/>
</dbReference>
<dbReference type="PDB" id="7ZRM">
    <property type="method" value="EM"/>
    <property type="resolution" value="3.70 A"/>
    <property type="chains" value="C=1-190"/>
</dbReference>
<dbReference type="PDBsum" id="5MRW"/>
<dbReference type="PDBsum" id="6HRA"/>
<dbReference type="PDBsum" id="6HRB"/>
<dbReference type="PDBsum" id="7BGY"/>
<dbReference type="PDBsum" id="7BH1"/>
<dbReference type="PDBsum" id="7BH2"/>
<dbReference type="PDBsum" id="7LC3"/>
<dbReference type="PDBsum" id="7LC6"/>
<dbReference type="PDBsum" id="7NNL"/>
<dbReference type="PDBsum" id="7NNP"/>
<dbReference type="PDBsum" id="7ZRD"/>
<dbReference type="PDBsum" id="7ZRE"/>
<dbReference type="PDBsum" id="7ZRG"/>
<dbReference type="PDBsum" id="7ZRH"/>
<dbReference type="PDBsum" id="7ZRI"/>
<dbReference type="PDBsum" id="7ZRJ"/>
<dbReference type="PDBsum" id="7ZRK"/>
<dbReference type="PDBsum" id="7ZRL"/>
<dbReference type="PDBsum" id="7ZRM"/>
<dbReference type="EMDB" id="EMD-0257"/>
<dbReference type="EMDB" id="EMD-0258"/>
<dbReference type="EMDB" id="EMD-12184"/>
<dbReference type="EMDB" id="EMD-12185"/>
<dbReference type="EMDB" id="EMD-12186"/>
<dbReference type="EMDB" id="EMD-14911"/>
<dbReference type="EMDB" id="EMD-14912"/>
<dbReference type="EMDB" id="EMD-14913"/>
<dbReference type="EMDB" id="EMD-14914"/>
<dbReference type="EMDB" id="EMD-14915"/>
<dbReference type="EMDB" id="EMD-14916"/>
<dbReference type="EMDB" id="EMD-14917"/>
<dbReference type="EMDB" id="EMD-14918"/>
<dbReference type="EMDB" id="EMD-14919"/>
<dbReference type="EMDB" id="EMD-23268"/>
<dbReference type="EMDB" id="EMD-23269"/>
<dbReference type="SMR" id="P03961"/>
<dbReference type="BioGRID" id="4259349">
    <property type="interactions" value="20"/>
</dbReference>
<dbReference type="ComplexPortal" id="CPX-3564">
    <property type="entry name" value="KdpFABC potassium import complex"/>
</dbReference>
<dbReference type="FunCoup" id="P03961">
    <property type="interactions" value="444"/>
</dbReference>
<dbReference type="IntAct" id="P03961">
    <property type="interactions" value="2"/>
</dbReference>
<dbReference type="MINT" id="P03961"/>
<dbReference type="STRING" id="511145.b0696"/>
<dbReference type="TCDB" id="3.A.3.7.1">
    <property type="family name" value="the p-type atpase (p-atpase) superfamily"/>
</dbReference>
<dbReference type="PaxDb" id="511145-b0696"/>
<dbReference type="EnsemblBacteria" id="AAC73790">
    <property type="protein sequence ID" value="AAC73790"/>
    <property type="gene ID" value="b0696"/>
</dbReference>
<dbReference type="GeneID" id="947508"/>
<dbReference type="KEGG" id="ecj:JW0684"/>
<dbReference type="KEGG" id="eco:b0696"/>
<dbReference type="KEGG" id="ecoc:C3026_03475"/>
<dbReference type="PATRIC" id="fig|1411691.4.peg.1579"/>
<dbReference type="EchoBASE" id="EB0510"/>
<dbReference type="eggNOG" id="COG2156">
    <property type="taxonomic scope" value="Bacteria"/>
</dbReference>
<dbReference type="HOGENOM" id="CLU_077094_2_0_6"/>
<dbReference type="InParanoid" id="P03961"/>
<dbReference type="OMA" id="KYFWPRP"/>
<dbReference type="OrthoDB" id="9788285at2"/>
<dbReference type="PhylomeDB" id="P03961"/>
<dbReference type="BioCyc" id="EcoCyc:EG10515-MONOMER"/>
<dbReference type="BioCyc" id="MetaCyc:EG10515-MONOMER"/>
<dbReference type="BRENDA" id="7.2.2.6">
    <property type="organism ID" value="2026"/>
</dbReference>
<dbReference type="PRO" id="PR:P03961"/>
<dbReference type="Proteomes" id="UP000000625">
    <property type="component" value="Chromosome"/>
</dbReference>
<dbReference type="GO" id="GO:0005886">
    <property type="term" value="C:plasma membrane"/>
    <property type="evidence" value="ECO:0000314"/>
    <property type="project" value="ComplexPortal"/>
</dbReference>
<dbReference type="GO" id="GO:0031004">
    <property type="term" value="C:potassium ion-transporting ATPase complex"/>
    <property type="evidence" value="ECO:0000314"/>
    <property type="project" value="EcoCyc"/>
</dbReference>
<dbReference type="GO" id="GO:1903103">
    <property type="term" value="C:potassium:proton antiporter complex"/>
    <property type="evidence" value="ECO:0000353"/>
    <property type="project" value="ComplexPortal"/>
</dbReference>
<dbReference type="GO" id="GO:0005524">
    <property type="term" value="F:ATP binding"/>
    <property type="evidence" value="ECO:0007669"/>
    <property type="project" value="UniProtKB-UniRule"/>
</dbReference>
<dbReference type="GO" id="GO:0008556">
    <property type="term" value="F:P-type potassium transmembrane transporter activity"/>
    <property type="evidence" value="ECO:0000314"/>
    <property type="project" value="EcoCyc"/>
</dbReference>
<dbReference type="GO" id="GO:0098655">
    <property type="term" value="P:monoatomic cation transmembrane transport"/>
    <property type="evidence" value="ECO:0000314"/>
    <property type="project" value="EcoCyc"/>
</dbReference>
<dbReference type="GO" id="GO:0071805">
    <property type="term" value="P:potassium ion transmembrane transport"/>
    <property type="evidence" value="ECO:0000314"/>
    <property type="project" value="EcoCyc"/>
</dbReference>
<dbReference type="GO" id="GO:0006813">
    <property type="term" value="P:potassium ion transport"/>
    <property type="evidence" value="ECO:0000314"/>
    <property type="project" value="ComplexPortal"/>
</dbReference>
<dbReference type="HAMAP" id="MF_00276">
    <property type="entry name" value="KdpC"/>
    <property type="match status" value="1"/>
</dbReference>
<dbReference type="InterPro" id="IPR003820">
    <property type="entry name" value="KdpC"/>
</dbReference>
<dbReference type="NCBIfam" id="TIGR00681">
    <property type="entry name" value="kdpC"/>
    <property type="match status" value="1"/>
</dbReference>
<dbReference type="NCBIfam" id="NF001454">
    <property type="entry name" value="PRK00315.1"/>
    <property type="match status" value="1"/>
</dbReference>
<dbReference type="PANTHER" id="PTHR30042">
    <property type="entry name" value="POTASSIUM-TRANSPORTING ATPASE C CHAIN"/>
    <property type="match status" value="1"/>
</dbReference>
<dbReference type="PANTHER" id="PTHR30042:SF2">
    <property type="entry name" value="POTASSIUM-TRANSPORTING ATPASE KDPC SUBUNIT"/>
    <property type="match status" value="1"/>
</dbReference>
<dbReference type="Pfam" id="PF02669">
    <property type="entry name" value="KdpC"/>
    <property type="match status" value="1"/>
</dbReference>
<dbReference type="PIRSF" id="PIRSF001296">
    <property type="entry name" value="K_ATPase_KdpC"/>
    <property type="match status" value="1"/>
</dbReference>
<name>KDPC_ECOLI</name>
<proteinExistence type="evidence at protein level"/>
<protein>
    <recommendedName>
        <fullName evidence="1">Potassium-transporting ATPase KdpC subunit</fullName>
    </recommendedName>
    <alternativeName>
        <fullName evidence="1">ATP phosphohydrolase [potassium-transporting] C chain</fullName>
    </alternativeName>
    <alternativeName>
        <fullName evidence="1">Potassium-binding and translocating subunit C</fullName>
    </alternativeName>
    <alternativeName>
        <fullName evidence="1">Potassium-translocating ATPase C chain</fullName>
    </alternativeName>
</protein>
<organism>
    <name type="scientific">Escherichia coli (strain K12)</name>
    <dbReference type="NCBI Taxonomy" id="83333"/>
    <lineage>
        <taxon>Bacteria</taxon>
        <taxon>Pseudomonadati</taxon>
        <taxon>Pseudomonadota</taxon>
        <taxon>Gammaproteobacteria</taxon>
        <taxon>Enterobacterales</taxon>
        <taxon>Enterobacteriaceae</taxon>
        <taxon>Escherichia</taxon>
    </lineage>
</organism>
<reference key="1">
    <citation type="journal article" date="1984" name="Proc. Natl. Acad. Sci. U.S.A.">
        <title>Sequence homology between two membrane transport ATPases, the Kdp-ATPase of Escherichia coli and the Ca2+-ATPase of sarcoplasmic reticulum.</title>
        <authorList>
            <person name="Hesse J.E."/>
            <person name="Wieczorek L."/>
            <person name="Altendorf K."/>
            <person name="Reicin A.S."/>
            <person name="Dorus E."/>
            <person name="Epstein W."/>
        </authorList>
    </citation>
    <scope>NUCLEOTIDE SEQUENCE [GENOMIC DNA]</scope>
</reference>
<reference key="2">
    <citation type="journal article" date="1996" name="DNA Res.">
        <title>A 718-kb DNA sequence of the Escherichia coli K-12 genome corresponding to the 12.7-28.0 min region on the linkage map.</title>
        <authorList>
            <person name="Oshima T."/>
            <person name="Aiba H."/>
            <person name="Baba T."/>
            <person name="Fujita K."/>
            <person name="Hayashi K."/>
            <person name="Honjo A."/>
            <person name="Ikemoto K."/>
            <person name="Inada T."/>
            <person name="Itoh T."/>
            <person name="Kajihara M."/>
            <person name="Kanai K."/>
            <person name="Kashimoto K."/>
            <person name="Kimura S."/>
            <person name="Kitagawa M."/>
            <person name="Makino K."/>
            <person name="Masuda S."/>
            <person name="Miki T."/>
            <person name="Mizobuchi K."/>
            <person name="Mori H."/>
            <person name="Motomura K."/>
            <person name="Nakamura Y."/>
            <person name="Nashimoto H."/>
            <person name="Nishio Y."/>
            <person name="Saito N."/>
            <person name="Sampei G."/>
            <person name="Seki Y."/>
            <person name="Tagami H."/>
            <person name="Takemoto K."/>
            <person name="Wada C."/>
            <person name="Yamamoto Y."/>
            <person name="Yano M."/>
            <person name="Horiuchi T."/>
        </authorList>
    </citation>
    <scope>NUCLEOTIDE SEQUENCE [LARGE SCALE GENOMIC DNA]</scope>
    <source>
        <strain>K12 / W3110 / ATCC 27325 / DSM 5911</strain>
    </source>
</reference>
<reference key="3">
    <citation type="journal article" date="1997" name="Science">
        <title>The complete genome sequence of Escherichia coli K-12.</title>
        <authorList>
            <person name="Blattner F.R."/>
            <person name="Plunkett G. III"/>
            <person name="Bloch C.A."/>
            <person name="Perna N.T."/>
            <person name="Burland V."/>
            <person name="Riley M."/>
            <person name="Collado-Vides J."/>
            <person name="Glasner J.D."/>
            <person name="Rode C.K."/>
            <person name="Mayhew G.F."/>
            <person name="Gregor J."/>
            <person name="Davis N.W."/>
            <person name="Kirkpatrick H.A."/>
            <person name="Goeden M.A."/>
            <person name="Rose D.J."/>
            <person name="Mau B."/>
            <person name="Shao Y."/>
        </authorList>
    </citation>
    <scope>NUCLEOTIDE SEQUENCE [LARGE SCALE GENOMIC DNA]</scope>
    <source>
        <strain>K12 / MG1655 / ATCC 47076</strain>
    </source>
</reference>
<reference key="4">
    <citation type="journal article" date="2006" name="Mol. Syst. Biol.">
        <title>Highly accurate genome sequences of Escherichia coli K-12 strains MG1655 and W3110.</title>
        <authorList>
            <person name="Hayashi K."/>
            <person name="Morooka N."/>
            <person name="Yamamoto Y."/>
            <person name="Fujita K."/>
            <person name="Isono K."/>
            <person name="Choi S."/>
            <person name="Ohtsubo E."/>
            <person name="Baba T."/>
            <person name="Wanner B.L."/>
            <person name="Mori H."/>
            <person name="Horiuchi T."/>
        </authorList>
    </citation>
    <scope>NUCLEOTIDE SEQUENCE [LARGE SCALE GENOMIC DNA]</scope>
    <source>
        <strain>K12 / W3110 / ATCC 27325 / DSM 5911</strain>
    </source>
</reference>
<reference key="5">
    <citation type="journal article" date="1992" name="J. Bacteriol.">
        <title>KdpD and KdpE, proteins that control expression of the kdpABC operon, are members of the two-component sensor-effector class of regulators.</title>
        <authorList>
            <person name="Walderhaug M.O."/>
            <person name="Polarek J.W."/>
            <person name="Voelkner P."/>
            <person name="Daniel J.M."/>
            <person name="Hesse J.E."/>
            <person name="Altendorf K."/>
            <person name="Epstein W."/>
        </authorList>
    </citation>
    <scope>NUCLEOTIDE SEQUENCE [GENOMIC DNA] OF 143-190</scope>
</reference>
<reference key="6">
    <citation type="journal article" date="1988" name="Eur. J. Biochem.">
        <title>The K+-translocating Kdp-ATPase from Escherichia coli. Purification, enzymatic properties and production of complex- and subunit-specific antisera.</title>
        <authorList>
            <person name="Siebers A."/>
            <person name="Altendorf K."/>
        </authorList>
    </citation>
    <scope>FUNCTION IN POTASSIUM TRANSPORT</scope>
    <scope>SUBUNIT</scope>
    <scope>SUBCELLULAR LOCATION</scope>
</reference>
<reference key="7">
    <citation type="journal article" date="1992" name="J. Bacteriol.">
        <title>The products of the kdpDE operon are required for expression of the Kdp ATPase of Escherichia coli.</title>
        <authorList>
            <person name="Polarek J.W."/>
            <person name="Williams G."/>
            <person name="Epstein W."/>
        </authorList>
    </citation>
    <scope>INDUCTION</scope>
    <source>
        <strain>K12</strain>
    </source>
</reference>
<reference key="8">
    <citation type="journal article" date="1993" name="Biochim. Biophys. Acta">
        <title>ATP-driven potassium transport in right-side-out membrane vesicles via the Kdp system of Escherichia coli.</title>
        <authorList>
            <person name="Kollmann R."/>
            <person name="Altendorf K."/>
        </authorList>
    </citation>
    <scope>FUNCTION IN POTASSIUM TRANSPORT</scope>
    <source>
        <strain>K12</strain>
    </source>
</reference>
<reference key="9">
    <citation type="journal article" date="1998" name="Biochim. Biophys. Acta">
        <title>Assembly of the Kdp complex, the multi-subunit K+-transport ATPase of Escherichia coli.</title>
        <authorList>
            <person name="Gassel M."/>
            <person name="Siebers A."/>
            <person name="Epstein W."/>
            <person name="Altendorf K."/>
        </authorList>
    </citation>
    <scope>SUBUNIT</scope>
    <source>
        <strain>K12</strain>
    </source>
</reference>
<reference key="10">
    <citation type="journal article" date="1999" name="J. Biol. Chem.">
        <title>The KdpF subunit is part of the K(+)-translocating Kdp complex of Escherichia coli and is responsible for stabilization of the complex in vitro.</title>
        <authorList>
            <person name="Gassel M."/>
            <person name="Mollenkamp T."/>
            <person name="Puppe W."/>
            <person name="Altendorf K."/>
        </authorList>
    </citation>
    <scope>SUBUNIT</scope>
    <source>
        <strain>K12</strain>
    </source>
</reference>
<reference key="11">
    <citation type="journal article" date="2008" name="Biochemistry">
        <title>K+-translocating KdpFABC P-type ATPase from Escherichia coli acts as a functional and structural dimer.</title>
        <authorList>
            <person name="Heitkamp T."/>
            <person name="Kalinowski R."/>
            <person name="Boettcher B."/>
            <person name="Boersch M."/>
            <person name="Altendorf K."/>
            <person name="Greie J.C."/>
        </authorList>
    </citation>
    <scope>SUBUNIT</scope>
</reference>
<reference key="12">
    <citation type="journal article" date="2011" name="FEBS J.">
        <title>The KdpC subunit of the Escherichia coli K+-transporting KdpB P-type ATPase acts as a catalytic chaperone.</title>
        <authorList>
            <person name="Irzik K."/>
            <person name="Pfroetzschner J."/>
            <person name="Goss T."/>
            <person name="Ahnert F."/>
            <person name="Haupt M."/>
            <person name="Greie J.C."/>
        </authorList>
    </citation>
    <scope>FUNCTION</scope>
    <scope>ATP-BINDING</scope>
    <scope>MUTAGENESIS OF 140-GLN--LEU-150</scope>
</reference>
<reference key="13">
    <citation type="journal article" date="2013" name="Biochemistry">
        <title>Mechanistic analysis of the pump cycle of the KdpFABC P-type ATPase.</title>
        <authorList>
            <person name="Damnjanovic B."/>
            <person name="Weber A."/>
            <person name="Potschies M."/>
            <person name="Greie J.C."/>
            <person name="Apell H.J."/>
        </authorList>
    </citation>
    <scope>FUNCTION</scope>
</reference>
<reference evidence="12" key="14">
    <citation type="journal article" date="2017" name="Nature">
        <title>Crystal structure of the potassium-importing KdpFABC membrane complex.</title>
        <authorList>
            <person name="Huang C.S."/>
            <person name="Pedersen B.P."/>
            <person name="Stokes D.L."/>
        </authorList>
    </citation>
    <scope>X-RAY CRYSTALLOGRAPHY (2.90 ANGSTROMS) OF 4-190 IN COMPLEX WITH KDPA; KDPB AND KDPF</scope>
    <scope>SUBUNIT</scope>
    <scope>SUBCELLULAR LOCATION</scope>
    <scope>TOPOLOGY</scope>
</reference>
<reference evidence="13 14" key="15">
    <citation type="journal article" date="2018" name="Nat. Commun.">
        <title>Cryo-EM structures of KdpFABC suggest a K+ transport mechanism via two inter-subunit half-channels.</title>
        <authorList>
            <person name="Stock C."/>
            <person name="Hielkema L."/>
            <person name="Tascon I."/>
            <person name="Wunnicke D."/>
            <person name="Oostergetel G.T."/>
            <person name="Azkargorta M."/>
            <person name="Paulino C."/>
            <person name="Haenelt I."/>
        </authorList>
    </citation>
    <scope>STRUCTURE BY ELECTRON MICROSCOPY (3.70 ANGSTROMS) OF KDPFABC COMPLEX IN E1 AND E2 STATE</scope>
    <scope>SUBUNIT</scope>
    <scope>SUBCELLULAR LOCATION</scope>
    <scope>TOPOLOGY</scope>
</reference>
<reference evidence="15 16 17 18 19" key="16">
    <citation type="journal article" date="2021" name="Proc. Natl. Acad. Sci. U.S.A.">
        <title>Structural basis for potassium transport in prokaryotes by KdpFABC.</title>
        <authorList>
            <person name="Sweet M.E."/>
            <person name="Larsen C."/>
            <person name="Zhang X."/>
            <person name="Schlame M."/>
            <person name="Pedersen B.P."/>
            <person name="Stokes D.L."/>
        </authorList>
    </citation>
    <scope>STRUCTURE BY ELECTRON MICROSCOPY (2.90 ANGSTROMS) OF KDPFABC COMPLEX IN MAJOR ENZYMATIC STATES</scope>
</reference>
<comment type="function">
    <text evidence="5 6 7 10">Part of the high-affinity ATP-driven potassium transport (or Kdp) system, which catalyzes the hydrolysis of ATP coupled with the electrogenic transport of potassium into the cytoplasm (PubMed:23930894, PubMed:2849541, PubMed:8499455). This subunit acts as a catalytic chaperone that increases the ATP-binding affinity of the ATP-hydrolyzing subunit KdpB by the formation of a transient KdpB/KdpC/ATP ternary complex (PubMed:21711450).</text>
</comment>
<comment type="subunit">
    <text evidence="2 4 7 8 9 11">The system is composed of three essential subunits: KdpA, KdpB and KdpC (PubMed:2849541, PubMed:28636601, PubMed:30478378, PubMed:9858692). The complex also contains KdpF, a small non-essential subunit (PubMed:10608856, PubMed:28636601, PubMed:30478378). The KdpFABC complex exists as a dimer above concentrations of 30-50 nM, whereas the complex exists as a functional monomer at lower concentrations (PubMed:18298081).</text>
</comment>
<comment type="interaction">
    <interactant intactId="EBI-6997216">
        <id>P03961</id>
    </interactant>
    <interactant intactId="EBI-1116956">
        <id>P03960</id>
        <label>kdpB</label>
    </interactant>
    <organismsDiffer>false</organismsDiffer>
    <experiments>2</experiments>
</comment>
<comment type="subcellular location">
    <subcellularLocation>
        <location evidence="1 7 8 9">Cell inner membrane</location>
        <topology evidence="1 8 9">Single-pass membrane protein</topology>
    </subcellularLocation>
</comment>
<comment type="induction">
    <text evidence="3">Transcriptionally regulated by the KdpD/KdpE two-component regulatory system.</text>
</comment>
<comment type="similarity">
    <text evidence="1">Belongs to the KdpC family.</text>
</comment>
<feature type="chain" id="PRO_0000196990" description="Potassium-transporting ATPase KdpC subunit">
    <location>
        <begin position="1"/>
        <end position="190"/>
    </location>
</feature>
<feature type="topological domain" description="Cytoplasmic" evidence="8 9">
    <location>
        <begin position="1"/>
        <end position="5"/>
    </location>
</feature>
<feature type="transmembrane region" description="Helical" evidence="8 9 12 13">
    <location>
        <begin position="6"/>
        <end position="34"/>
    </location>
</feature>
<feature type="topological domain" description="Periplasmic" evidence="8 9">
    <location>
        <begin position="35"/>
        <end position="190"/>
    </location>
</feature>
<feature type="mutagenesis site" description="Cell does not grow at low potassium concentrations." evidence="5">
    <original>QIPRVAKARNL</original>
    <variation>AIPAASKSANA</variation>
    <location>
        <begin position="140"/>
        <end position="150"/>
    </location>
</feature>
<feature type="helix" evidence="20">
    <location>
        <begin position="5"/>
        <end position="19"/>
    </location>
</feature>
<feature type="helix" evidence="20">
    <location>
        <begin position="21"/>
        <end position="33"/>
    </location>
</feature>
<feature type="helix" evidence="20">
    <location>
        <begin position="35"/>
        <end position="38"/>
    </location>
</feature>
<feature type="strand" evidence="20">
    <location>
        <begin position="42"/>
        <end position="45"/>
    </location>
</feature>
<feature type="strand" evidence="20">
    <location>
        <begin position="48"/>
        <end position="52"/>
    </location>
</feature>
<feature type="turn" evidence="20">
    <location>
        <begin position="53"/>
        <end position="55"/>
    </location>
</feature>
<feature type="strand" evidence="20">
    <location>
        <begin position="62"/>
        <end position="64"/>
    </location>
</feature>
<feature type="strand" evidence="20">
    <location>
        <begin position="73"/>
        <end position="75"/>
    </location>
</feature>
<feature type="turn" evidence="20">
    <location>
        <begin position="79"/>
        <end position="81"/>
    </location>
</feature>
<feature type="helix" evidence="20">
    <location>
        <begin position="92"/>
        <end position="108"/>
    </location>
</feature>
<feature type="strand" evidence="21">
    <location>
        <begin position="110"/>
        <end position="112"/>
    </location>
</feature>
<feature type="strand" evidence="20">
    <location>
        <begin position="114"/>
        <end position="116"/>
    </location>
</feature>
<feature type="helix" evidence="20">
    <location>
        <begin position="118"/>
        <end position="121"/>
    </location>
</feature>
<feature type="strand" evidence="20">
    <location>
        <begin position="125"/>
        <end position="127"/>
    </location>
</feature>
<feature type="helix" evidence="20">
    <location>
        <begin position="134"/>
        <end position="139"/>
    </location>
</feature>
<feature type="helix" evidence="20">
    <location>
        <begin position="141"/>
        <end position="148"/>
    </location>
</feature>
<feature type="helix" evidence="20">
    <location>
        <begin position="152"/>
        <end position="161"/>
    </location>
</feature>
<feature type="turn" evidence="20">
    <location>
        <begin position="169"/>
        <end position="171"/>
    </location>
</feature>
<feature type="strand" evidence="20">
    <location>
        <begin position="175"/>
        <end position="177"/>
    </location>
</feature>
<feature type="helix" evidence="20">
    <location>
        <begin position="178"/>
        <end position="189"/>
    </location>
</feature>
<keyword id="KW-0002">3D-structure</keyword>
<keyword id="KW-0067">ATP-binding</keyword>
<keyword id="KW-0997">Cell inner membrane</keyword>
<keyword id="KW-1003">Cell membrane</keyword>
<keyword id="KW-0406">Ion transport</keyword>
<keyword id="KW-0472">Membrane</keyword>
<keyword id="KW-0547">Nucleotide-binding</keyword>
<keyword id="KW-0630">Potassium</keyword>
<keyword id="KW-0633">Potassium transport</keyword>
<keyword id="KW-1185">Reference proteome</keyword>
<keyword id="KW-0812">Transmembrane</keyword>
<keyword id="KW-1133">Transmembrane helix</keyword>
<keyword id="KW-0813">Transport</keyword>